<name>PRLB_ACHLY</name>
<organism>
    <name type="scientific">Achromobacter lyticus</name>
    <dbReference type="NCBI Taxonomy" id="224"/>
    <lineage>
        <taxon>Bacteria</taxon>
        <taxon>Pseudomonadati</taxon>
        <taxon>Pseudomonadota</taxon>
        <taxon>Betaproteobacteria</taxon>
        <taxon>Burkholderiales</taxon>
        <taxon>Alcaligenaceae</taxon>
        <taxon>Achromobacter</taxon>
    </lineage>
</organism>
<proteinExistence type="evidence at protein level"/>
<sequence length="374" mass="40085">MKKISKAGLGLALVCALATIGGNAARRATAQRRGSGVFYDEMFDFDIDAHLAKHAPHLHKHSEEISHWAGYSGISRSVDRADGAAERAVTPSARRIVRSASWRAPTASARRPARSRWRCASRCTSAIPTRQGAGDAGPRQSAAGAVRAFRRQRAGGRAARRRRVPAGLRPPVQRTAPGQGGFGPLRQGRPGRAAVSPNGLLQFPFPRGASWHVGGAHTNTGSGNYPMSSLDMSRGGGWGSNQNGNWVSASAAGSFKRHSSCFAEIVHTGGWSTTYYHLMNIQYNTGANVSMNTAIANPANTQAQALCNGGQSTGPHEHWSLKQNGSFYHLNGTYLSGYRITATGSSYDTNCSRFYLTKNGQNYCYGYYVNPGPN</sequence>
<feature type="signal peptide">
    <location>
        <begin position="1"/>
        <end position="24"/>
    </location>
</feature>
<feature type="propeptide" id="PRO_0000026810" evidence="4">
    <location>
        <begin position="25"/>
        <end position="195"/>
    </location>
</feature>
<feature type="chain" id="PRO_0000026811" description="Beta-lytic metalloendopeptidase">
    <location>
        <begin position="196"/>
        <end position="374"/>
    </location>
</feature>
<feature type="region of interest" description="Disordered" evidence="3">
    <location>
        <begin position="128"/>
        <end position="187"/>
    </location>
</feature>
<feature type="compositionally biased region" description="Basic residues" evidence="3">
    <location>
        <begin position="148"/>
        <end position="164"/>
    </location>
</feature>
<feature type="binding site" evidence="2">
    <location>
        <position position="316"/>
    </location>
    <ligand>
        <name>Zn(2+)</name>
        <dbReference type="ChEBI" id="CHEBI:29105"/>
    </ligand>
</feature>
<feature type="binding site" evidence="2">
    <location>
        <position position="318"/>
    </location>
    <ligand>
        <name>Zn(2+)</name>
        <dbReference type="ChEBI" id="CHEBI:29105"/>
    </ligand>
</feature>
<feature type="disulfide bond" evidence="1">
    <location>
        <begin position="261"/>
        <end position="307"/>
    </location>
</feature>
<feature type="disulfide bond" evidence="1">
    <location>
        <begin position="351"/>
        <end position="364"/>
    </location>
</feature>
<evidence type="ECO:0000250" key="1"/>
<evidence type="ECO:0000255" key="2"/>
<evidence type="ECO:0000256" key="3">
    <source>
        <dbReference type="SAM" id="MobiDB-lite"/>
    </source>
</evidence>
<evidence type="ECO:0000269" key="4">
    <source>
    </source>
</evidence>
<evidence type="ECO:0000305" key="5"/>
<dbReference type="EC" id="3.4.24.32"/>
<dbReference type="EMBL" id="M60896">
    <property type="protein sequence ID" value="AAA21906.1"/>
    <property type="molecule type" value="Genomic_DNA"/>
</dbReference>
<dbReference type="PIR" id="A37151">
    <property type="entry name" value="LYYXLY"/>
</dbReference>
<dbReference type="SMR" id="P27458"/>
<dbReference type="MEROPS" id="M23.001"/>
<dbReference type="KEGG" id="ag:AAA21906"/>
<dbReference type="GO" id="GO:0005576">
    <property type="term" value="C:extracellular region"/>
    <property type="evidence" value="ECO:0007669"/>
    <property type="project" value="UniProtKB-SubCell"/>
</dbReference>
<dbReference type="GO" id="GO:0046872">
    <property type="term" value="F:metal ion binding"/>
    <property type="evidence" value="ECO:0007669"/>
    <property type="project" value="UniProtKB-KW"/>
</dbReference>
<dbReference type="GO" id="GO:0004222">
    <property type="term" value="F:metalloendopeptidase activity"/>
    <property type="evidence" value="ECO:0007669"/>
    <property type="project" value="InterPro"/>
</dbReference>
<dbReference type="GO" id="GO:0006508">
    <property type="term" value="P:proteolysis"/>
    <property type="evidence" value="ECO:0007669"/>
    <property type="project" value="UniProtKB-KW"/>
</dbReference>
<dbReference type="CDD" id="cd12797">
    <property type="entry name" value="M23_peptidase"/>
    <property type="match status" value="1"/>
</dbReference>
<dbReference type="Gene3D" id="2.70.70.10">
    <property type="entry name" value="Glucose Permease (Domain IIA)"/>
    <property type="match status" value="1"/>
</dbReference>
<dbReference type="InterPro" id="IPR011055">
    <property type="entry name" value="Dup_hybrid_motif"/>
</dbReference>
<dbReference type="InterPro" id="IPR000841">
    <property type="entry name" value="Pept_M23A_Blytic"/>
</dbReference>
<dbReference type="PRINTS" id="PR00933">
    <property type="entry name" value="BLYTICPTASE"/>
</dbReference>
<dbReference type="SUPFAM" id="SSF51261">
    <property type="entry name" value="Duplicated hybrid motif"/>
    <property type="match status" value="1"/>
</dbReference>
<keyword id="KW-0903">Direct protein sequencing</keyword>
<keyword id="KW-1015">Disulfide bond</keyword>
<keyword id="KW-0378">Hydrolase</keyword>
<keyword id="KW-0479">Metal-binding</keyword>
<keyword id="KW-0482">Metalloprotease</keyword>
<keyword id="KW-0645">Protease</keyword>
<keyword id="KW-0964">Secreted</keyword>
<keyword id="KW-0732">Signal</keyword>
<keyword id="KW-0862">Zinc</keyword>
<keyword id="KW-0865">Zymogen</keyword>
<accession>P27458</accession>
<reference key="1">
    <citation type="journal article" date="1990" name="J. Bacteriol.">
        <title>Molecular cloning and nucleotide sequence of the beta-lytic protease gene from Achromobacter lyticus.</title>
        <authorList>
            <person name="Li S.L."/>
            <person name="Norioka S."/>
            <person name="Sakiyama F."/>
        </authorList>
    </citation>
    <scope>NUCLEOTIDE SEQUENCE [GENOMIC DNA]</scope>
    <scope>PROTEIN SEQUENCE OF 196-220</scope>
    <source>
        <strain>M497-1</strain>
    </source>
</reference>
<protein>
    <recommendedName>
        <fullName>Beta-lytic metalloendopeptidase</fullName>
        <ecNumber>3.4.24.32</ecNumber>
    </recommendedName>
    <alternativeName>
        <fullName>Beta-lytic protease</fullName>
    </alternativeName>
</protein>
<comment type="catalytic activity">
    <reaction>
        <text>Cleavage of N-acetylmuramoyl-|-Ala, and of the insulin B chain at 23-Gly-|-Phe-24 &gt; 18-Val-|-Cys(SO3H).</text>
        <dbReference type="EC" id="3.4.24.32"/>
    </reaction>
</comment>
<comment type="cofactor">
    <cofactor>
        <name>Zn(2+)</name>
        <dbReference type="ChEBI" id="CHEBI:29105"/>
    </cofactor>
    <text>Binds 1 zinc ion per subunit.</text>
</comment>
<comment type="subcellular location">
    <subcellularLocation>
        <location>Secreted</location>
    </subcellularLocation>
</comment>
<comment type="similarity">
    <text evidence="5">Belongs to the peptidase M23A family.</text>
</comment>